<evidence type="ECO:0000255" key="1">
    <source>
        <dbReference type="HAMAP-Rule" id="MF_01334"/>
    </source>
</evidence>
<evidence type="ECO:0000305" key="2"/>
<feature type="chain" id="PRO_0000181513" description="Large ribosomal subunit protein bL25">
    <location>
        <begin position="1"/>
        <end position="196"/>
    </location>
</feature>
<name>RL25_BACTN</name>
<dbReference type="EMBL" id="AE015928">
    <property type="protein sequence ID" value="AAO79694.1"/>
    <property type="molecule type" value="Genomic_DNA"/>
</dbReference>
<dbReference type="RefSeq" id="NP_813500.1">
    <property type="nucleotide sequence ID" value="NC_004663.1"/>
</dbReference>
<dbReference type="RefSeq" id="WP_008760337.1">
    <property type="nucleotide sequence ID" value="NZ_UYXG01000024.1"/>
</dbReference>
<dbReference type="SMR" id="Q89YZ1"/>
<dbReference type="STRING" id="226186.BT_4589"/>
<dbReference type="PaxDb" id="226186-BT_4589"/>
<dbReference type="EnsemblBacteria" id="AAO79694">
    <property type="protein sequence ID" value="AAO79694"/>
    <property type="gene ID" value="BT_4589"/>
</dbReference>
<dbReference type="KEGG" id="bth:BT_4589"/>
<dbReference type="PATRIC" id="fig|226186.12.peg.4669"/>
<dbReference type="eggNOG" id="COG1825">
    <property type="taxonomic scope" value="Bacteria"/>
</dbReference>
<dbReference type="HOGENOM" id="CLU_075939_2_1_10"/>
<dbReference type="InParanoid" id="Q89YZ1"/>
<dbReference type="OrthoDB" id="9786489at2"/>
<dbReference type="Proteomes" id="UP000001414">
    <property type="component" value="Chromosome"/>
</dbReference>
<dbReference type="GO" id="GO:0022625">
    <property type="term" value="C:cytosolic large ribosomal subunit"/>
    <property type="evidence" value="ECO:0000318"/>
    <property type="project" value="GO_Central"/>
</dbReference>
<dbReference type="GO" id="GO:0008097">
    <property type="term" value="F:5S rRNA binding"/>
    <property type="evidence" value="ECO:0000318"/>
    <property type="project" value="GO_Central"/>
</dbReference>
<dbReference type="GO" id="GO:0003735">
    <property type="term" value="F:structural constituent of ribosome"/>
    <property type="evidence" value="ECO:0007669"/>
    <property type="project" value="InterPro"/>
</dbReference>
<dbReference type="GO" id="GO:0006412">
    <property type="term" value="P:translation"/>
    <property type="evidence" value="ECO:0000318"/>
    <property type="project" value="GO_Central"/>
</dbReference>
<dbReference type="CDD" id="cd00495">
    <property type="entry name" value="Ribosomal_L25_TL5_CTC"/>
    <property type="match status" value="1"/>
</dbReference>
<dbReference type="FunFam" id="2.170.120.20:FF:000001">
    <property type="entry name" value="50S ribosomal protein L25"/>
    <property type="match status" value="1"/>
</dbReference>
<dbReference type="FunFam" id="2.40.240.10:FF:000009">
    <property type="entry name" value="50S ribosomal protein L25"/>
    <property type="match status" value="1"/>
</dbReference>
<dbReference type="Gene3D" id="2.170.120.20">
    <property type="entry name" value="Ribosomal protein L25, beta domain"/>
    <property type="match status" value="1"/>
</dbReference>
<dbReference type="Gene3D" id="2.40.240.10">
    <property type="entry name" value="Ribosomal Protein L25, Chain P"/>
    <property type="match status" value="1"/>
</dbReference>
<dbReference type="HAMAP" id="MF_01334">
    <property type="entry name" value="Ribosomal_bL25_CTC"/>
    <property type="match status" value="1"/>
</dbReference>
<dbReference type="InterPro" id="IPR020056">
    <property type="entry name" value="Rbsml_bL25/Gln-tRNA_synth_N"/>
</dbReference>
<dbReference type="InterPro" id="IPR011035">
    <property type="entry name" value="Ribosomal_bL25/Gln-tRNA_synth"/>
</dbReference>
<dbReference type="InterPro" id="IPR020057">
    <property type="entry name" value="Ribosomal_bL25_b-dom"/>
</dbReference>
<dbReference type="InterPro" id="IPR037121">
    <property type="entry name" value="Ribosomal_bL25_C"/>
</dbReference>
<dbReference type="InterPro" id="IPR001021">
    <property type="entry name" value="Ribosomal_bL25_long"/>
</dbReference>
<dbReference type="InterPro" id="IPR029751">
    <property type="entry name" value="Ribosomal_L25_dom"/>
</dbReference>
<dbReference type="InterPro" id="IPR020930">
    <property type="entry name" value="Ribosomal_uL5_bac-type"/>
</dbReference>
<dbReference type="NCBIfam" id="TIGR00731">
    <property type="entry name" value="bL25_bact_ctc"/>
    <property type="match status" value="1"/>
</dbReference>
<dbReference type="NCBIfam" id="NF004132">
    <property type="entry name" value="PRK05618.2-2"/>
    <property type="match status" value="1"/>
</dbReference>
<dbReference type="PANTHER" id="PTHR33284">
    <property type="entry name" value="RIBOSOMAL PROTEIN L25/GLN-TRNA SYNTHETASE, ANTI-CODON-BINDING DOMAIN-CONTAINING PROTEIN"/>
    <property type="match status" value="1"/>
</dbReference>
<dbReference type="PANTHER" id="PTHR33284:SF1">
    <property type="entry name" value="RIBOSOMAL PROTEIN L25_GLN-TRNA SYNTHETASE, ANTI-CODON-BINDING DOMAIN-CONTAINING PROTEIN"/>
    <property type="match status" value="1"/>
</dbReference>
<dbReference type="Pfam" id="PF01386">
    <property type="entry name" value="Ribosomal_L25p"/>
    <property type="match status" value="1"/>
</dbReference>
<dbReference type="Pfam" id="PF14693">
    <property type="entry name" value="Ribosomal_TL5_C"/>
    <property type="match status" value="1"/>
</dbReference>
<dbReference type="SUPFAM" id="SSF50715">
    <property type="entry name" value="Ribosomal protein L25-like"/>
    <property type="match status" value="1"/>
</dbReference>
<accession>Q89YZ1</accession>
<proteinExistence type="inferred from homology"/>
<comment type="function">
    <text evidence="1">This is one of the proteins that binds to the 5S RNA in the ribosome where it forms part of the central protuberance.</text>
</comment>
<comment type="subunit">
    <text evidence="1">Part of the 50S ribosomal subunit; part of the 5S rRNA/L5/L18/L25 subcomplex. Contacts the 5S rRNA. Binds to the 5S rRNA independently of L5 and L18.</text>
</comment>
<comment type="similarity">
    <text evidence="1">Belongs to the bacterial ribosomal protein bL25 family. CTC subfamily.</text>
</comment>
<sequence length="196" mass="21179">MKSIEVKGTARTIAERSSEQARALKEIRKNGGVPCVLYGAGEVVHFTVTNEGLRNLVYTPHIYVVDLDIDGKKVNAILKDIQFHPVKDNILHVDFYQIDEAKPIVMEVPVQLEGLAEGVKAGGKLALQMRKIKVKALYNVIPEKLTVNVSHLGLGKTVKVGELSFEGLELISAKEAVVCAVKLTRAARGAAAAAGK</sequence>
<protein>
    <recommendedName>
        <fullName evidence="1">Large ribosomal subunit protein bL25</fullName>
    </recommendedName>
    <alternativeName>
        <fullName evidence="2">50S ribosomal protein L25</fullName>
    </alternativeName>
    <alternativeName>
        <fullName evidence="1">General stress protein CTC</fullName>
    </alternativeName>
</protein>
<gene>
    <name evidence="1" type="primary">rplY</name>
    <name evidence="1" type="synonym">ctc</name>
    <name type="ordered locus">BT_4589</name>
</gene>
<organism>
    <name type="scientific">Bacteroides thetaiotaomicron (strain ATCC 29148 / DSM 2079 / JCM 5827 / CCUG 10774 / NCTC 10582 / VPI-5482 / E50)</name>
    <dbReference type="NCBI Taxonomy" id="226186"/>
    <lineage>
        <taxon>Bacteria</taxon>
        <taxon>Pseudomonadati</taxon>
        <taxon>Bacteroidota</taxon>
        <taxon>Bacteroidia</taxon>
        <taxon>Bacteroidales</taxon>
        <taxon>Bacteroidaceae</taxon>
        <taxon>Bacteroides</taxon>
    </lineage>
</organism>
<keyword id="KW-1185">Reference proteome</keyword>
<keyword id="KW-0687">Ribonucleoprotein</keyword>
<keyword id="KW-0689">Ribosomal protein</keyword>
<keyword id="KW-0694">RNA-binding</keyword>
<keyword id="KW-0699">rRNA-binding</keyword>
<reference key="1">
    <citation type="journal article" date="2003" name="Science">
        <title>A genomic view of the human-Bacteroides thetaiotaomicron symbiosis.</title>
        <authorList>
            <person name="Xu J."/>
            <person name="Bjursell M.K."/>
            <person name="Himrod J."/>
            <person name="Deng S."/>
            <person name="Carmichael L.K."/>
            <person name="Chiang H.C."/>
            <person name="Hooper L.V."/>
            <person name="Gordon J.I."/>
        </authorList>
    </citation>
    <scope>NUCLEOTIDE SEQUENCE [LARGE SCALE GENOMIC DNA]</scope>
    <source>
        <strain>ATCC 29148 / DSM 2079 / JCM 5827 / CCUG 10774 / NCTC 10582 / VPI-5482 / E50</strain>
    </source>
</reference>